<protein>
    <recommendedName>
        <fullName evidence="1">Histidinol-phosphate aminotransferase</fullName>
        <ecNumber evidence="1">2.6.1.9</ecNumber>
    </recommendedName>
    <alternativeName>
        <fullName evidence="1">Imidazole acetol-phosphate transaminase</fullName>
    </alternativeName>
</protein>
<evidence type="ECO:0000255" key="1">
    <source>
        <dbReference type="HAMAP-Rule" id="MF_01023"/>
    </source>
</evidence>
<comment type="catalytic activity">
    <reaction evidence="1">
        <text>L-histidinol phosphate + 2-oxoglutarate = 3-(imidazol-4-yl)-2-oxopropyl phosphate + L-glutamate</text>
        <dbReference type="Rhea" id="RHEA:23744"/>
        <dbReference type="ChEBI" id="CHEBI:16810"/>
        <dbReference type="ChEBI" id="CHEBI:29985"/>
        <dbReference type="ChEBI" id="CHEBI:57766"/>
        <dbReference type="ChEBI" id="CHEBI:57980"/>
        <dbReference type="EC" id="2.6.1.9"/>
    </reaction>
</comment>
<comment type="cofactor">
    <cofactor evidence="1">
        <name>pyridoxal 5'-phosphate</name>
        <dbReference type="ChEBI" id="CHEBI:597326"/>
    </cofactor>
</comment>
<comment type="pathway">
    <text evidence="1">Amino-acid biosynthesis; L-histidine biosynthesis; L-histidine from 5-phospho-alpha-D-ribose 1-diphosphate: step 7/9.</text>
</comment>
<comment type="subunit">
    <text evidence="1">Homodimer.</text>
</comment>
<comment type="similarity">
    <text evidence="1">Belongs to the class-II pyridoxal-phosphate-dependent aminotransferase family. Histidinol-phosphate aminotransferase subfamily.</text>
</comment>
<sequence length="368" mass="42153">MTDNVLKLSRKNIKKLIPYQSARRIGGEHGNILLNANESPVSIFFKLKKKPFNRYPECQPSKLISSYAHYVNLSCNQILATRGADEGIELLIKAFCEPGKDAIIYCPPTYDMYRINATIAGVEIKEIPTIKNTWQLDLLNIKLNLSRVKLIYICNPNNPTGNIFFKKDLIFLLNITLGQALVVIDEAYIEFSPEESMTNYLKDYPNLVVLRTLSKAFALAGIRCGFTLAKKEIIQTLSKVISPYPISIPVSDIAIRSLEKDYVQLMKNRVLDSNNNRIWLINQLKNITCVETVFESNANYVLVKFSMFEKVFETLWNKGIILRNQNEKMNLKKCIRISMGTRSESLRLIKELKIFSKKNMCQGEMSEK</sequence>
<gene>
    <name evidence="1" type="primary">hisC</name>
    <name type="ordered locus">BUAPTUC7_100</name>
</gene>
<organism>
    <name type="scientific">Buchnera aphidicola subsp. Acyrthosiphon pisum (strain Tuc7)</name>
    <dbReference type="NCBI Taxonomy" id="561501"/>
    <lineage>
        <taxon>Bacteria</taxon>
        <taxon>Pseudomonadati</taxon>
        <taxon>Pseudomonadota</taxon>
        <taxon>Gammaproteobacteria</taxon>
        <taxon>Enterobacterales</taxon>
        <taxon>Erwiniaceae</taxon>
        <taxon>Buchnera</taxon>
    </lineage>
</organism>
<name>HIS8_BUCAT</name>
<accession>B8D707</accession>
<reference key="1">
    <citation type="journal article" date="2009" name="Science">
        <title>The dynamics and time scale of ongoing genomic erosion in symbiotic bacteria.</title>
        <authorList>
            <person name="Moran N.A."/>
            <person name="McLaughlin H.J."/>
            <person name="Sorek R."/>
        </authorList>
    </citation>
    <scope>NUCLEOTIDE SEQUENCE [LARGE SCALE GENOMIC DNA]</scope>
    <source>
        <strain>Tuc7</strain>
    </source>
</reference>
<feature type="chain" id="PRO_1000149085" description="Histidinol-phosphate aminotransferase">
    <location>
        <begin position="1"/>
        <end position="368"/>
    </location>
</feature>
<feature type="modified residue" description="N6-(pyridoxal phosphate)lysine" evidence="1">
    <location>
        <position position="215"/>
    </location>
</feature>
<keyword id="KW-0028">Amino-acid biosynthesis</keyword>
<keyword id="KW-0032">Aminotransferase</keyword>
<keyword id="KW-0368">Histidine biosynthesis</keyword>
<keyword id="KW-0663">Pyridoxal phosphate</keyword>
<keyword id="KW-0808">Transferase</keyword>
<dbReference type="EC" id="2.6.1.9" evidence="1"/>
<dbReference type="EMBL" id="CP001158">
    <property type="protein sequence ID" value="ACL29922.1"/>
    <property type="molecule type" value="Genomic_DNA"/>
</dbReference>
<dbReference type="RefSeq" id="WP_009874056.1">
    <property type="nucleotide sequence ID" value="NC_011834.1"/>
</dbReference>
<dbReference type="SMR" id="B8D707"/>
<dbReference type="KEGG" id="bau:BUAPTUC7_100"/>
<dbReference type="HOGENOM" id="CLU_017584_3_1_6"/>
<dbReference type="UniPathway" id="UPA00031">
    <property type="reaction ID" value="UER00012"/>
</dbReference>
<dbReference type="GO" id="GO:0004400">
    <property type="term" value="F:histidinol-phosphate transaminase activity"/>
    <property type="evidence" value="ECO:0007669"/>
    <property type="project" value="UniProtKB-UniRule"/>
</dbReference>
<dbReference type="GO" id="GO:0030170">
    <property type="term" value="F:pyridoxal phosphate binding"/>
    <property type="evidence" value="ECO:0007669"/>
    <property type="project" value="InterPro"/>
</dbReference>
<dbReference type="GO" id="GO:0000105">
    <property type="term" value="P:L-histidine biosynthetic process"/>
    <property type="evidence" value="ECO:0007669"/>
    <property type="project" value="UniProtKB-UniRule"/>
</dbReference>
<dbReference type="CDD" id="cd00609">
    <property type="entry name" value="AAT_like"/>
    <property type="match status" value="1"/>
</dbReference>
<dbReference type="Gene3D" id="3.90.1150.10">
    <property type="entry name" value="Aspartate Aminotransferase, domain 1"/>
    <property type="match status" value="1"/>
</dbReference>
<dbReference type="Gene3D" id="3.40.640.10">
    <property type="entry name" value="Type I PLP-dependent aspartate aminotransferase-like (Major domain)"/>
    <property type="match status" value="1"/>
</dbReference>
<dbReference type="HAMAP" id="MF_01023">
    <property type="entry name" value="HisC_aminotrans_2"/>
    <property type="match status" value="1"/>
</dbReference>
<dbReference type="InterPro" id="IPR001917">
    <property type="entry name" value="Aminotrans_II_pyridoxalP_BS"/>
</dbReference>
<dbReference type="InterPro" id="IPR004839">
    <property type="entry name" value="Aminotransferase_I/II_large"/>
</dbReference>
<dbReference type="InterPro" id="IPR005861">
    <property type="entry name" value="HisP_aminotrans"/>
</dbReference>
<dbReference type="InterPro" id="IPR015424">
    <property type="entry name" value="PyrdxlP-dep_Trfase"/>
</dbReference>
<dbReference type="InterPro" id="IPR015421">
    <property type="entry name" value="PyrdxlP-dep_Trfase_major"/>
</dbReference>
<dbReference type="InterPro" id="IPR015422">
    <property type="entry name" value="PyrdxlP-dep_Trfase_small"/>
</dbReference>
<dbReference type="NCBIfam" id="TIGR01141">
    <property type="entry name" value="hisC"/>
    <property type="match status" value="1"/>
</dbReference>
<dbReference type="PANTHER" id="PTHR42885:SF2">
    <property type="entry name" value="HISTIDINOL-PHOSPHATE AMINOTRANSFERASE"/>
    <property type="match status" value="1"/>
</dbReference>
<dbReference type="PANTHER" id="PTHR42885">
    <property type="entry name" value="HISTIDINOL-PHOSPHATE AMINOTRANSFERASE-RELATED"/>
    <property type="match status" value="1"/>
</dbReference>
<dbReference type="Pfam" id="PF00155">
    <property type="entry name" value="Aminotran_1_2"/>
    <property type="match status" value="1"/>
</dbReference>
<dbReference type="SUPFAM" id="SSF53383">
    <property type="entry name" value="PLP-dependent transferases"/>
    <property type="match status" value="1"/>
</dbReference>
<dbReference type="PROSITE" id="PS00599">
    <property type="entry name" value="AA_TRANSFER_CLASS_2"/>
    <property type="match status" value="1"/>
</dbReference>
<proteinExistence type="inferred from homology"/>